<keyword id="KW-0119">Carbohydrate metabolism</keyword>
<keyword id="KW-0456">Lyase</keyword>
<accession>Q57LE0</accession>
<evidence type="ECO:0000255" key="1">
    <source>
        <dbReference type="HAMAP-Rule" id="MF_00068"/>
    </source>
</evidence>
<dbReference type="EC" id="4.2.1.126" evidence="1"/>
<dbReference type="EMBL" id="AE017220">
    <property type="protein sequence ID" value="AAX66472.1"/>
    <property type="molecule type" value="Genomic_DNA"/>
</dbReference>
<dbReference type="RefSeq" id="WP_001048534.1">
    <property type="nucleotide sequence ID" value="NC_006905.1"/>
</dbReference>
<dbReference type="SMR" id="Q57LE0"/>
<dbReference type="KEGG" id="sec:SCH_2566"/>
<dbReference type="HOGENOM" id="CLU_049049_1_1_6"/>
<dbReference type="UniPathway" id="UPA00342"/>
<dbReference type="UniPathway" id="UPA00343"/>
<dbReference type="UniPathway" id="UPA00544"/>
<dbReference type="Proteomes" id="UP000000538">
    <property type="component" value="Chromosome"/>
</dbReference>
<dbReference type="GO" id="GO:0097367">
    <property type="term" value="F:carbohydrate derivative binding"/>
    <property type="evidence" value="ECO:0007669"/>
    <property type="project" value="InterPro"/>
</dbReference>
<dbReference type="GO" id="GO:0016835">
    <property type="term" value="F:carbon-oxygen lyase activity"/>
    <property type="evidence" value="ECO:0007669"/>
    <property type="project" value="UniProtKB-UniRule"/>
</dbReference>
<dbReference type="GO" id="GO:0016803">
    <property type="term" value="F:ether hydrolase activity"/>
    <property type="evidence" value="ECO:0007669"/>
    <property type="project" value="TreeGrafter"/>
</dbReference>
<dbReference type="GO" id="GO:0097175">
    <property type="term" value="P:1,6-anhydro-N-acetyl-beta-muramic acid catabolic process"/>
    <property type="evidence" value="ECO:0007669"/>
    <property type="project" value="UniProtKB-UniRule"/>
</dbReference>
<dbReference type="GO" id="GO:0046348">
    <property type="term" value="P:amino sugar catabolic process"/>
    <property type="evidence" value="ECO:0007669"/>
    <property type="project" value="InterPro"/>
</dbReference>
<dbReference type="GO" id="GO:0097173">
    <property type="term" value="P:N-acetylmuramic acid catabolic process"/>
    <property type="evidence" value="ECO:0007669"/>
    <property type="project" value="UniProtKB-UniPathway"/>
</dbReference>
<dbReference type="GO" id="GO:0009254">
    <property type="term" value="P:peptidoglycan turnover"/>
    <property type="evidence" value="ECO:0007669"/>
    <property type="project" value="UniProtKB-UniRule"/>
</dbReference>
<dbReference type="CDD" id="cd05007">
    <property type="entry name" value="SIS_Etherase"/>
    <property type="match status" value="1"/>
</dbReference>
<dbReference type="FunFam" id="1.10.8.1080:FF:000001">
    <property type="entry name" value="N-acetylmuramic acid 6-phosphate etherase"/>
    <property type="match status" value="1"/>
</dbReference>
<dbReference type="FunFam" id="3.40.50.10490:FF:000014">
    <property type="entry name" value="N-acetylmuramic acid 6-phosphate etherase"/>
    <property type="match status" value="1"/>
</dbReference>
<dbReference type="Gene3D" id="1.10.8.1080">
    <property type="match status" value="1"/>
</dbReference>
<dbReference type="Gene3D" id="3.40.50.10490">
    <property type="entry name" value="Glucose-6-phosphate isomerase like protein, domain 1"/>
    <property type="match status" value="1"/>
</dbReference>
<dbReference type="HAMAP" id="MF_00068">
    <property type="entry name" value="MurQ"/>
    <property type="match status" value="1"/>
</dbReference>
<dbReference type="InterPro" id="IPR005488">
    <property type="entry name" value="Etherase_MurQ"/>
</dbReference>
<dbReference type="InterPro" id="IPR005486">
    <property type="entry name" value="Glucokinase_regulatory_CS"/>
</dbReference>
<dbReference type="InterPro" id="IPR040190">
    <property type="entry name" value="MURQ/GCKR"/>
</dbReference>
<dbReference type="InterPro" id="IPR001347">
    <property type="entry name" value="SIS_dom"/>
</dbReference>
<dbReference type="InterPro" id="IPR046348">
    <property type="entry name" value="SIS_dom_sf"/>
</dbReference>
<dbReference type="NCBIfam" id="TIGR00274">
    <property type="entry name" value="N-acetylmuramic acid 6-phosphate etherase"/>
    <property type="match status" value="1"/>
</dbReference>
<dbReference type="NCBIfam" id="NF003915">
    <property type="entry name" value="PRK05441.1"/>
    <property type="match status" value="1"/>
</dbReference>
<dbReference type="NCBIfam" id="NF009222">
    <property type="entry name" value="PRK12570.1"/>
    <property type="match status" value="1"/>
</dbReference>
<dbReference type="PANTHER" id="PTHR10088">
    <property type="entry name" value="GLUCOKINASE REGULATORY PROTEIN"/>
    <property type="match status" value="1"/>
</dbReference>
<dbReference type="PANTHER" id="PTHR10088:SF5">
    <property type="entry name" value="N-ACETYLMURAMIC ACID 6-PHOSPHATE ETHERASE"/>
    <property type="match status" value="1"/>
</dbReference>
<dbReference type="Pfam" id="PF22645">
    <property type="entry name" value="GKRP_SIS_N"/>
    <property type="match status" value="1"/>
</dbReference>
<dbReference type="SUPFAM" id="SSF53697">
    <property type="entry name" value="SIS domain"/>
    <property type="match status" value="1"/>
</dbReference>
<dbReference type="PROSITE" id="PS01272">
    <property type="entry name" value="GCKR"/>
    <property type="match status" value="1"/>
</dbReference>
<dbReference type="PROSITE" id="PS51464">
    <property type="entry name" value="SIS"/>
    <property type="match status" value="1"/>
</dbReference>
<sequence length="297" mass="30918">MNLGTLVSETRNPQTMDLDALPTPELVKRFNEQDTRVAEAVKATLPDVARAVDAAAAALKSGGRIIYMGAGTSGRLGVLDASECPPTFGVPHGLVVGLIAGGPGALLKAVEGAEDSQQAGEDDLVALNLQEQDLVVGLAASGRTPYVIGGLRYARQSGCTTVAVSCNPDSPIAREANIAISPVVGPEALTGSTRLKSGTAQKMVLNMISTGAMVKFGKVYQNLMVDMKATNVKLVDRACRMVVEATGIGREEAEALLKQTDFEVKPAILMALTGLDAAAAREKLAAHQGFLRAALEH</sequence>
<name>MURQ_SALCH</name>
<proteinExistence type="inferred from homology"/>
<comment type="function">
    <text evidence="1">Specifically catalyzes the cleavage of the D-lactyl ether substituent of MurNAc 6-phosphate, producing GlcNAc 6-phosphate and D-lactate. Together with AnmK, is also required for the utilization of anhydro-N-acetylmuramic acid (anhMurNAc) either imported from the medium or derived from its own cell wall murein, and thus plays a role in cell wall recycling.</text>
</comment>
<comment type="catalytic activity">
    <reaction evidence="1">
        <text>N-acetyl-D-muramate 6-phosphate + H2O = N-acetyl-D-glucosamine 6-phosphate + (R)-lactate</text>
        <dbReference type="Rhea" id="RHEA:26410"/>
        <dbReference type="ChEBI" id="CHEBI:15377"/>
        <dbReference type="ChEBI" id="CHEBI:16004"/>
        <dbReference type="ChEBI" id="CHEBI:57513"/>
        <dbReference type="ChEBI" id="CHEBI:58722"/>
        <dbReference type="EC" id="4.2.1.126"/>
    </reaction>
</comment>
<comment type="pathway">
    <text evidence="1">Amino-sugar metabolism; 1,6-anhydro-N-acetylmuramate degradation.</text>
</comment>
<comment type="pathway">
    <text evidence="1">Amino-sugar metabolism; N-acetylmuramate degradation.</text>
</comment>
<comment type="pathway">
    <text evidence="1">Cell wall biogenesis; peptidoglycan recycling.</text>
</comment>
<comment type="subunit">
    <text evidence="1">Homodimer.</text>
</comment>
<comment type="induction">
    <text evidence="1">Induced by MurNAc 6-phosphate that releases the repressor MurR from the DNA. Repressed by MurR in the absence of MurNAc 6-phosphate.</text>
</comment>
<comment type="miscellaneous">
    <text evidence="1">A lyase-type mechanism (elimination/hydration) is suggested for the cleavage of the lactyl ether bond of MurNAc 6-phosphate, with the formation of an alpha,beta-unsaturated aldehyde intermediate with (E)-stereochemistry, followed by the syn addition of water to give product.</text>
</comment>
<comment type="similarity">
    <text evidence="1">Belongs to the GCKR-like family. MurNAc-6-P etherase subfamily.</text>
</comment>
<feature type="chain" id="PRO_0000249648" description="N-acetylmuramic acid 6-phosphate etherase">
    <location>
        <begin position="1"/>
        <end position="297"/>
    </location>
</feature>
<feature type="domain" description="SIS" evidence="1">
    <location>
        <begin position="55"/>
        <end position="218"/>
    </location>
</feature>
<feature type="active site" description="Proton donor" evidence="1">
    <location>
        <position position="83"/>
    </location>
</feature>
<feature type="active site" evidence="1">
    <location>
        <position position="114"/>
    </location>
</feature>
<organism>
    <name type="scientific">Salmonella choleraesuis (strain SC-B67)</name>
    <dbReference type="NCBI Taxonomy" id="321314"/>
    <lineage>
        <taxon>Bacteria</taxon>
        <taxon>Pseudomonadati</taxon>
        <taxon>Pseudomonadota</taxon>
        <taxon>Gammaproteobacteria</taxon>
        <taxon>Enterobacterales</taxon>
        <taxon>Enterobacteriaceae</taxon>
        <taxon>Salmonella</taxon>
    </lineage>
</organism>
<protein>
    <recommendedName>
        <fullName evidence="1">N-acetylmuramic acid 6-phosphate etherase</fullName>
        <shortName evidence="1">MurNAc-6-P etherase</shortName>
        <ecNumber evidence="1">4.2.1.126</ecNumber>
    </recommendedName>
    <alternativeName>
        <fullName evidence="1">N-acetylmuramic acid 6-phosphate hydrolase</fullName>
    </alternativeName>
    <alternativeName>
        <fullName evidence="1">N-acetylmuramic acid 6-phosphate lyase</fullName>
    </alternativeName>
</protein>
<gene>
    <name evidence="1" type="primary">murQ</name>
    <name type="ordered locus">SCH_2566</name>
</gene>
<reference key="1">
    <citation type="journal article" date="2005" name="Nucleic Acids Res.">
        <title>The genome sequence of Salmonella enterica serovar Choleraesuis, a highly invasive and resistant zoonotic pathogen.</title>
        <authorList>
            <person name="Chiu C.-H."/>
            <person name="Tang P."/>
            <person name="Chu C."/>
            <person name="Hu S."/>
            <person name="Bao Q."/>
            <person name="Yu J."/>
            <person name="Chou Y.-Y."/>
            <person name="Wang H.-S."/>
            <person name="Lee Y.-S."/>
        </authorList>
    </citation>
    <scope>NUCLEOTIDE SEQUENCE [LARGE SCALE GENOMIC DNA]</scope>
    <source>
        <strain>SC-B67</strain>
    </source>
</reference>